<protein>
    <recommendedName>
        <fullName>Cilia- and flagella-associated protein 68</fullName>
    </recommendedName>
</protein>
<reference key="1">
    <citation type="journal article" date="2000" name="Biochem. Biophys. Res. Commun.">
        <title>Characterization of five novel human genes in the 11q13-q22 region.</title>
        <authorList>
            <person name="O'Brien K.P."/>
            <person name="Tapia-Paez I."/>
            <person name="Staahle-Baeckdahl M."/>
            <person name="Kedra D."/>
            <person name="Dumanski J.P."/>
        </authorList>
    </citation>
    <scope>NUCLEOTIDE SEQUENCE [MRNA]</scope>
    <scope>SUBCELLULAR LOCATION</scope>
    <scope>VARIANT ALA-40</scope>
</reference>
<reference key="2">
    <citation type="journal article" date="2004" name="Nat. Genet.">
        <title>Complete sequencing and characterization of 21,243 full-length human cDNAs.</title>
        <authorList>
            <person name="Ota T."/>
            <person name="Suzuki Y."/>
            <person name="Nishikawa T."/>
            <person name="Otsuki T."/>
            <person name="Sugiyama T."/>
            <person name="Irie R."/>
            <person name="Wakamatsu A."/>
            <person name="Hayashi K."/>
            <person name="Sato H."/>
            <person name="Nagai K."/>
            <person name="Kimura K."/>
            <person name="Makita H."/>
            <person name="Sekine M."/>
            <person name="Obayashi M."/>
            <person name="Nishi T."/>
            <person name="Shibahara T."/>
            <person name="Tanaka T."/>
            <person name="Ishii S."/>
            <person name="Yamamoto J."/>
            <person name="Saito K."/>
            <person name="Kawai Y."/>
            <person name="Isono Y."/>
            <person name="Nakamura Y."/>
            <person name="Nagahari K."/>
            <person name="Murakami K."/>
            <person name="Yasuda T."/>
            <person name="Iwayanagi T."/>
            <person name="Wagatsuma M."/>
            <person name="Shiratori A."/>
            <person name="Sudo H."/>
            <person name="Hosoiri T."/>
            <person name="Kaku Y."/>
            <person name="Kodaira H."/>
            <person name="Kondo H."/>
            <person name="Sugawara M."/>
            <person name="Takahashi M."/>
            <person name="Kanda K."/>
            <person name="Yokoi T."/>
            <person name="Furuya T."/>
            <person name="Kikkawa E."/>
            <person name="Omura Y."/>
            <person name="Abe K."/>
            <person name="Kamihara K."/>
            <person name="Katsuta N."/>
            <person name="Sato K."/>
            <person name="Tanikawa M."/>
            <person name="Yamazaki M."/>
            <person name="Ninomiya K."/>
            <person name="Ishibashi T."/>
            <person name="Yamashita H."/>
            <person name="Murakawa K."/>
            <person name="Fujimori K."/>
            <person name="Tanai H."/>
            <person name="Kimata M."/>
            <person name="Watanabe M."/>
            <person name="Hiraoka S."/>
            <person name="Chiba Y."/>
            <person name="Ishida S."/>
            <person name="Ono Y."/>
            <person name="Takiguchi S."/>
            <person name="Watanabe S."/>
            <person name="Yosida M."/>
            <person name="Hotuta T."/>
            <person name="Kusano J."/>
            <person name="Kanehori K."/>
            <person name="Takahashi-Fujii A."/>
            <person name="Hara H."/>
            <person name="Tanase T.-O."/>
            <person name="Nomura Y."/>
            <person name="Togiya S."/>
            <person name="Komai F."/>
            <person name="Hara R."/>
            <person name="Takeuchi K."/>
            <person name="Arita M."/>
            <person name="Imose N."/>
            <person name="Musashino K."/>
            <person name="Yuuki H."/>
            <person name="Oshima A."/>
            <person name="Sasaki N."/>
            <person name="Aotsuka S."/>
            <person name="Yoshikawa Y."/>
            <person name="Matsunawa H."/>
            <person name="Ichihara T."/>
            <person name="Shiohata N."/>
            <person name="Sano S."/>
            <person name="Moriya S."/>
            <person name="Momiyama H."/>
            <person name="Satoh N."/>
            <person name="Takami S."/>
            <person name="Terashima Y."/>
            <person name="Suzuki O."/>
            <person name="Nakagawa S."/>
            <person name="Senoh A."/>
            <person name="Mizoguchi H."/>
            <person name="Goto Y."/>
            <person name="Shimizu F."/>
            <person name="Wakebe H."/>
            <person name="Hishigaki H."/>
            <person name="Watanabe T."/>
            <person name="Sugiyama A."/>
            <person name="Takemoto M."/>
            <person name="Kawakami B."/>
            <person name="Yamazaki M."/>
            <person name="Watanabe K."/>
            <person name="Kumagai A."/>
            <person name="Itakura S."/>
            <person name="Fukuzumi Y."/>
            <person name="Fujimori Y."/>
            <person name="Komiyama M."/>
            <person name="Tashiro H."/>
            <person name="Tanigami A."/>
            <person name="Fujiwara T."/>
            <person name="Ono T."/>
            <person name="Yamada K."/>
            <person name="Fujii Y."/>
            <person name="Ozaki K."/>
            <person name="Hirao M."/>
            <person name="Ohmori Y."/>
            <person name="Kawabata A."/>
            <person name="Hikiji T."/>
            <person name="Kobatake N."/>
            <person name="Inagaki H."/>
            <person name="Ikema Y."/>
            <person name="Okamoto S."/>
            <person name="Okitani R."/>
            <person name="Kawakami T."/>
            <person name="Noguchi S."/>
            <person name="Itoh T."/>
            <person name="Shigeta K."/>
            <person name="Senba T."/>
            <person name="Matsumura K."/>
            <person name="Nakajima Y."/>
            <person name="Mizuno T."/>
            <person name="Morinaga M."/>
            <person name="Sasaki M."/>
            <person name="Togashi T."/>
            <person name="Oyama M."/>
            <person name="Hata H."/>
            <person name="Watanabe M."/>
            <person name="Komatsu T."/>
            <person name="Mizushima-Sugano J."/>
            <person name="Satoh T."/>
            <person name="Shirai Y."/>
            <person name="Takahashi Y."/>
            <person name="Nakagawa K."/>
            <person name="Okumura K."/>
            <person name="Nagase T."/>
            <person name="Nomura N."/>
            <person name="Kikuchi H."/>
            <person name="Masuho Y."/>
            <person name="Yamashita R."/>
            <person name="Nakai K."/>
            <person name="Yada T."/>
            <person name="Nakamura Y."/>
            <person name="Ohara O."/>
            <person name="Isogai T."/>
            <person name="Sugano S."/>
        </authorList>
    </citation>
    <scope>NUCLEOTIDE SEQUENCE [LARGE SCALE MRNA]</scope>
    <source>
        <tissue>Lung</tissue>
    </source>
</reference>
<reference key="3">
    <citation type="submission" date="2004-06" db="EMBL/GenBank/DDBJ databases">
        <title>Cloning of human full open reading frames in Gateway(TM) system entry vector (pDONR201).</title>
        <authorList>
            <person name="Ebert L."/>
            <person name="Schick M."/>
            <person name="Neubert P."/>
            <person name="Schatten R."/>
            <person name="Henze S."/>
            <person name="Korn B."/>
        </authorList>
    </citation>
    <scope>NUCLEOTIDE SEQUENCE [LARGE SCALE MRNA]</scope>
    <scope>VARIANT ALA-40</scope>
</reference>
<reference key="4">
    <citation type="journal article" date="2004" name="Genome Res.">
        <title>The status, quality, and expansion of the NIH full-length cDNA project: the Mammalian Gene Collection (MGC).</title>
        <authorList>
            <consortium name="The MGC Project Team"/>
        </authorList>
    </citation>
    <scope>NUCLEOTIDE SEQUENCE [LARGE SCALE MRNA]</scope>
    <source>
        <tissue>Embryonic testis carcinoma</tissue>
    </source>
</reference>
<reference key="5">
    <citation type="journal article" date="2022" name="Proc. Natl. Acad. Sci. U.S.A.">
        <title>SPACA9 is a lumenal protein of human ciliary singlet and doublet microtubules.</title>
        <authorList>
            <person name="Gui M."/>
            <person name="Croft J.T."/>
            <person name="Zabeo D."/>
            <person name="Acharya V."/>
            <person name="Kollman J.M."/>
            <person name="Burgoyne T."/>
            <person name="Hoog J.L."/>
            <person name="Brown A."/>
        </authorList>
    </citation>
    <scope>STRUCTURE BY ELECTRON MICROSCOPY (3.60 ANGSTROMS) IN ASSOCIATION WITH MICROTUBULES</scope>
    <scope>SUBCELLULAR LOCATION</scope>
    <scope>FUNCTION</scope>
</reference>
<reference key="6">
    <citation type="journal article" date="2024" name="Nat. Commun.">
        <title>Uncovering structural themes across cilia microtubule inner proteins with implications for human cilia function.</title>
        <authorList>
            <person name="Andersen J.S."/>
            <person name="Vijayakumaran A."/>
            <person name="Godbehere C."/>
            <person name="Lorentzen E."/>
            <person name="Mennella V."/>
            <person name="Schou K.B."/>
        </authorList>
    </citation>
    <scope>SUBCELLULAR LOCATION</scope>
    <scope>IDENTIFICATION OF MN REGIONS</scope>
</reference>
<organism>
    <name type="scientific">Homo sapiens</name>
    <name type="common">Human</name>
    <dbReference type="NCBI Taxonomy" id="9606"/>
    <lineage>
        <taxon>Eukaryota</taxon>
        <taxon>Metazoa</taxon>
        <taxon>Chordata</taxon>
        <taxon>Craniata</taxon>
        <taxon>Vertebrata</taxon>
        <taxon>Euteleostomi</taxon>
        <taxon>Mammalia</taxon>
        <taxon>Eutheria</taxon>
        <taxon>Euarchontoglires</taxon>
        <taxon>Primates</taxon>
        <taxon>Haplorrhini</taxon>
        <taxon>Catarrhini</taxon>
        <taxon>Hominidae</taxon>
        <taxon>Homo</taxon>
    </lineage>
</organism>
<keyword id="KW-0002">3D-structure</keyword>
<keyword id="KW-0966">Cell projection</keyword>
<keyword id="KW-0969">Cilium</keyword>
<keyword id="KW-0963">Cytoplasm</keyword>
<keyword id="KW-0206">Cytoskeleton</keyword>
<keyword id="KW-0282">Flagellum</keyword>
<keyword id="KW-0539">Nucleus</keyword>
<keyword id="KW-1267">Proteomics identification</keyword>
<keyword id="KW-1185">Reference proteome</keyword>
<comment type="function">
    <text evidence="3">Microtubule inner protein (MIP) part of the dynein-decorated doublet microtubules (DMTs) in cilia axoneme, which is required for motile cilia beating.</text>
</comment>
<comment type="subunit">
    <text evidence="1">Microtubule inner protein component of sperm flagellar doublet microtubules.</text>
</comment>
<comment type="interaction">
    <interactant intactId="EBI-718615">
        <id>Q9H5F2</id>
    </interactant>
    <interactant intactId="EBI-727098">
        <id>P21549</id>
        <label>AGXT</label>
    </interactant>
    <organismsDiffer>false</organismsDiffer>
    <experiments>3</experiments>
</comment>
<comment type="interaction">
    <interactant intactId="EBI-718615">
        <id>Q9H5F2</id>
    </interactant>
    <interactant intactId="EBI-17183751">
        <id>X5D778</id>
        <label>ANKRD11</label>
    </interactant>
    <organismsDiffer>false</organismsDiffer>
    <experiments>3</experiments>
</comment>
<comment type="interaction">
    <interactant intactId="EBI-718615">
        <id>Q9H5F2</id>
    </interactant>
    <interactant intactId="EBI-742909">
        <id>Q9H6L4</id>
        <label>ARMC7</label>
    </interactant>
    <organismsDiffer>false</organismsDiffer>
    <experiments>3</experiments>
</comment>
<comment type="interaction">
    <interactant intactId="EBI-718615">
        <id>Q9H5F2</id>
    </interactant>
    <interactant intactId="EBI-12006308">
        <id>Q7Z3C6-3</id>
        <label>ATG9A</label>
    </interactant>
    <organismsDiffer>false</organismsDiffer>
    <experiments>3</experiments>
</comment>
<comment type="interaction">
    <interactant intactId="EBI-718615">
        <id>Q9H5F2</id>
    </interactant>
    <interactant intactId="EBI-1166928">
        <id>Q8N5M1</id>
        <label>ATPAF2</label>
    </interactant>
    <organismsDiffer>false</organismsDiffer>
    <experiments>3</experiments>
</comment>
<comment type="interaction">
    <interactant intactId="EBI-718615">
        <id>Q9H5F2</id>
    </interactant>
    <interactant intactId="EBI-2837444">
        <id>Q8WUW1</id>
        <label>BRK1</label>
    </interactant>
    <organismsDiffer>false</organismsDiffer>
    <experiments>3</experiments>
</comment>
<comment type="interaction">
    <interactant intactId="EBI-718615">
        <id>Q9H5F2</id>
    </interactant>
    <interactant intactId="EBI-744545">
        <id>Q8NEC5</id>
        <label>CATSPER1</label>
    </interactant>
    <organismsDiffer>false</organismsDiffer>
    <experiments>5</experiments>
</comment>
<comment type="interaction">
    <interactant intactId="EBI-718615">
        <id>Q9H5F2</id>
    </interactant>
    <interactant intactId="EBI-743033">
        <id>Q9NZN8</id>
        <label>CNOT2</label>
    </interactant>
    <organismsDiffer>false</organismsDiffer>
    <experiments>3</experiments>
</comment>
<comment type="interaction">
    <interactant intactId="EBI-718615">
        <id>Q9H5F2</id>
    </interactant>
    <interactant intactId="EBI-747133">
        <id>P27658</id>
        <label>COL8A1</label>
    </interactant>
    <organismsDiffer>false</organismsDiffer>
    <experiments>3</experiments>
</comment>
<comment type="interaction">
    <interactant intactId="EBI-718615">
        <id>Q9H5F2</id>
    </interactant>
    <interactant intactId="EBI-9679045">
        <id>Q9NQL9</id>
        <label>DMRT3</label>
    </interactant>
    <organismsDiffer>false</organismsDiffer>
    <experiments>3</experiments>
</comment>
<comment type="interaction">
    <interactant intactId="EBI-718615">
        <id>Q9H5F2</id>
    </interactant>
    <interactant intactId="EBI-740376">
        <id>Q86UW9</id>
        <label>DTX2</label>
    </interactant>
    <organismsDiffer>false</organismsDiffer>
    <experiments>3</experiments>
</comment>
<comment type="interaction">
    <interactant intactId="EBI-718615">
        <id>Q9H5F2</id>
    </interactant>
    <interactant intactId="EBI-1759806">
        <id>O75593</id>
        <label>FOXH1</label>
    </interactant>
    <organismsDiffer>false</organismsDiffer>
    <experiments>3</experiments>
</comment>
<comment type="interaction">
    <interactant intactId="EBI-718615">
        <id>Q9H5F2</id>
    </interactant>
    <interactant intactId="EBI-725515">
        <id>O43559</id>
        <label>FRS3</label>
    </interactant>
    <organismsDiffer>false</organismsDiffer>
    <experiments>3</experiments>
</comment>
<comment type="interaction">
    <interactant intactId="EBI-718615">
        <id>Q9H5F2</id>
    </interactant>
    <interactant intactId="EBI-740220">
        <id>O14964</id>
        <label>HGS</label>
    </interactant>
    <organismsDiffer>false</organismsDiffer>
    <experiments>3</experiments>
</comment>
<comment type="interaction">
    <interactant intactId="EBI-718615">
        <id>Q9H5F2</id>
    </interactant>
    <interactant intactId="EBI-740785">
        <id>P49639</id>
        <label>HOXA1</label>
    </interactant>
    <organismsDiffer>false</organismsDiffer>
    <experiments>3</experiments>
</comment>
<comment type="interaction">
    <interactant intactId="EBI-718615">
        <id>Q9H5F2</id>
    </interactant>
    <interactant intactId="EBI-1752118">
        <id>P31273</id>
        <label>HOXC8</label>
    </interactant>
    <organismsDiffer>false</organismsDiffer>
    <experiments>3</experiments>
</comment>
<comment type="interaction">
    <interactant intactId="EBI-718615">
        <id>Q9H5F2</id>
    </interactant>
    <interactant intactId="EBI-2880706">
        <id>O43593</id>
        <label>HR</label>
    </interactant>
    <organismsDiffer>false</organismsDiffer>
    <experiments>3</experiments>
</comment>
<comment type="interaction">
    <interactant intactId="EBI-718615">
        <id>Q9H5F2</id>
    </interactant>
    <interactant intactId="EBI-2556193">
        <id>Q63ZY3</id>
        <label>KANK2</label>
    </interactant>
    <organismsDiffer>false</organismsDiffer>
    <experiments>3</experiments>
</comment>
<comment type="interaction">
    <interactant intactId="EBI-718615">
        <id>Q9H5F2</id>
    </interactant>
    <interactant intactId="EBI-6426443">
        <id>Q2WGJ6</id>
        <label>KLHL38</label>
    </interactant>
    <organismsDiffer>false</organismsDiffer>
    <experiments>3</experiments>
</comment>
<comment type="interaction">
    <interactant intactId="EBI-718615">
        <id>Q9H5F2</id>
    </interactant>
    <interactant intactId="EBI-11953846">
        <id>Q52LG2</id>
        <label>KRTAP13-2</label>
    </interactant>
    <organismsDiffer>false</organismsDiffer>
    <experiments>3</experiments>
</comment>
<comment type="interaction">
    <interactant intactId="EBI-718615">
        <id>Q9H5F2</id>
    </interactant>
    <interactant intactId="EBI-7950783">
        <id>Q96JP2</id>
        <label>MYO15B</label>
    </interactant>
    <organismsDiffer>false</organismsDiffer>
    <experiments>3</experiments>
</comment>
<comment type="interaction">
    <interactant intactId="EBI-718615">
        <id>Q9H5F2</id>
    </interactant>
    <interactant intactId="EBI-740446">
        <id>P32242</id>
        <label>OTX1</label>
    </interactant>
    <organismsDiffer>false</organismsDiffer>
    <experiments>3</experiments>
</comment>
<comment type="interaction">
    <interactant intactId="EBI-718615">
        <id>Q9H5F2</id>
    </interactant>
    <interactant intactId="EBI-11022007">
        <id>Q9HBE1-4</id>
        <label>PATZ1</label>
    </interactant>
    <organismsDiffer>false</organismsDiffer>
    <experiments>3</experiments>
</comment>
<comment type="interaction">
    <interactant intactId="EBI-718615">
        <id>Q9H5F2</id>
    </interactant>
    <interactant intactId="EBI-724639">
        <id>Q9UBV8</id>
        <label>PEF1</label>
    </interactant>
    <organismsDiffer>false</organismsDiffer>
    <experiments>3</experiments>
</comment>
<comment type="interaction">
    <interactant intactId="EBI-718615">
        <id>Q9H5F2</id>
    </interactant>
    <interactant intactId="EBI-748265">
        <id>P78337</id>
        <label>PITX1</label>
    </interactant>
    <organismsDiffer>false</organismsDiffer>
    <experiments>5</experiments>
</comment>
<comment type="interaction">
    <interactant intactId="EBI-718615">
        <id>Q9H5F2</id>
    </interactant>
    <interactant intactId="EBI-769257">
        <id>Q9NRQ2</id>
        <label>PLSCR4</label>
    </interactant>
    <organismsDiffer>false</organismsDiffer>
    <experiments>5</experiments>
</comment>
<comment type="interaction">
    <interactant intactId="EBI-718615">
        <id>Q9H5F2</id>
    </interactant>
    <interactant intactId="EBI-1053424">
        <id>O43741</id>
        <label>PRKAB2</label>
    </interactant>
    <organismsDiffer>false</organismsDiffer>
    <experiments>3</experiments>
</comment>
<comment type="interaction">
    <interactant intactId="EBI-718615">
        <id>Q9H5F2</id>
    </interactant>
    <interactant intactId="EBI-9027467">
        <id>O75360</id>
        <label>PROP1</label>
    </interactant>
    <organismsDiffer>false</organismsDiffer>
    <experiments>5</experiments>
</comment>
<comment type="interaction">
    <interactant intactId="EBI-718615">
        <id>Q9H5F2</id>
    </interactant>
    <interactant intactId="EBI-11986293">
        <id>P0CG20</id>
        <label>PRR35</label>
    </interactant>
    <organismsDiffer>false</organismsDiffer>
    <experiments>3</experiments>
</comment>
<comment type="interaction">
    <interactant intactId="EBI-718615">
        <id>Q9H5F2</id>
    </interactant>
    <interactant intactId="EBI-8463848">
        <id>Q8NB12</id>
        <label>SMYD1</label>
    </interactant>
    <organismsDiffer>false</organismsDiffer>
    <experiments>3</experiments>
</comment>
<comment type="interaction">
    <interactant intactId="EBI-718615">
        <id>Q9H5F2</id>
    </interactant>
    <interactant intactId="EBI-750487">
        <id>Q8WW24</id>
        <label>TEKT4</label>
    </interactant>
    <organismsDiffer>false</organismsDiffer>
    <experiments>3</experiments>
</comment>
<comment type="interaction">
    <interactant intactId="EBI-718615">
        <id>Q9H5F2</id>
    </interactant>
    <interactant intactId="EBI-11741437">
        <id>Q08117-2</id>
        <label>TLE5</label>
    </interactant>
    <organismsDiffer>false</organismsDiffer>
    <experiments>3</experiments>
</comment>
<comment type="interaction">
    <interactant intactId="EBI-718615">
        <id>Q9H5F2</id>
    </interactant>
    <interactant intactId="EBI-3939165">
        <id>O43711</id>
        <label>TLX3</label>
    </interactant>
    <organismsDiffer>false</organismsDiffer>
    <experiments>3</experiments>
</comment>
<comment type="interaction">
    <interactant intactId="EBI-718615">
        <id>Q9H5F2</id>
    </interactant>
    <interactant intactId="EBI-11963196">
        <id>Q15915</id>
        <label>ZIC1</label>
    </interactant>
    <organismsDiffer>false</organismsDiffer>
    <experiments>3</experiments>
</comment>
<comment type="subcellular location">
    <subcellularLocation>
        <location evidence="3">Cytoplasm</location>
        <location evidence="3">Cytoskeleton</location>
        <location evidence="3">Cilium axoneme</location>
    </subcellularLocation>
    <subcellularLocation>
        <location evidence="1">Cytoplasm</location>
        <location evidence="1">Cytoskeleton</location>
        <location evidence="1">Flagellum axoneme</location>
    </subcellularLocation>
    <subcellularLocation>
        <location evidence="2">Nucleus</location>
    </subcellularLocation>
    <subcellularLocation>
        <location evidence="4">Cell projection</location>
        <location evidence="4">Cilium</location>
    </subcellularLocation>
</comment>
<comment type="similarity">
    <text evidence="6">Belongs to the CFAP68 family.</text>
</comment>
<sequence>MAASQCLCCSKFLFQRQNLACFLTNPHCGSLVNADGHGEVWTDWNNMSKFFQYGWRCTTNENTYSNRTLMGNWNQERYDLRNIVQPKPLPSQFGHYFETTYDTSYNNKMPLSTHRFKREPHWFPGHQPELDPPRYKCTEKSTYMNSYSKP</sequence>
<dbReference type="EMBL" id="AJ250229">
    <property type="protein sequence ID" value="CAB96538.1"/>
    <property type="molecule type" value="mRNA"/>
</dbReference>
<dbReference type="EMBL" id="AK027152">
    <property type="protein sequence ID" value="BAB15674.1"/>
    <property type="molecule type" value="mRNA"/>
</dbReference>
<dbReference type="EMBL" id="CR457378">
    <property type="protein sequence ID" value="CAG33659.1"/>
    <property type="molecule type" value="mRNA"/>
</dbReference>
<dbReference type="EMBL" id="BC020628">
    <property type="protein sequence ID" value="AAH20628.1"/>
    <property type="molecule type" value="mRNA"/>
</dbReference>
<dbReference type="CCDS" id="CCDS8350.1"/>
<dbReference type="RefSeq" id="NP_001317300.1">
    <property type="nucleotide sequence ID" value="NM_001330371.1"/>
</dbReference>
<dbReference type="RefSeq" id="NP_073598.1">
    <property type="nucleotide sequence ID" value="NM_022761.3"/>
</dbReference>
<dbReference type="PDB" id="7UNG">
    <property type="method" value="EM"/>
    <property type="resolution" value="3.60 A"/>
    <property type="chains" value="I1=1-150"/>
</dbReference>
<dbReference type="PDB" id="8J07">
    <property type="method" value="EM"/>
    <property type="resolution" value="4.10 A"/>
    <property type="chains" value="5L/5M=1-150"/>
</dbReference>
<dbReference type="PDBsum" id="7UNG"/>
<dbReference type="PDBsum" id="8J07"/>
<dbReference type="EMDB" id="EMD-26624"/>
<dbReference type="EMDB" id="EMD-35888"/>
<dbReference type="SMR" id="Q9H5F2"/>
<dbReference type="BioGRID" id="122286">
    <property type="interactions" value="42"/>
</dbReference>
<dbReference type="FunCoup" id="Q9H5F2">
    <property type="interactions" value="113"/>
</dbReference>
<dbReference type="IntAct" id="Q9H5F2">
    <property type="interactions" value="41"/>
</dbReference>
<dbReference type="STRING" id="9606.ENSP00000260276"/>
<dbReference type="iPTMnet" id="Q9H5F2"/>
<dbReference type="PhosphoSitePlus" id="Q9H5F2"/>
<dbReference type="BioMuta" id="C11orf1"/>
<dbReference type="DMDM" id="47605552"/>
<dbReference type="MassIVE" id="Q9H5F2"/>
<dbReference type="PaxDb" id="9606-ENSP00000260276"/>
<dbReference type="PeptideAtlas" id="Q9H5F2"/>
<dbReference type="ProteomicsDB" id="80904"/>
<dbReference type="Antibodypedia" id="51443">
    <property type="antibodies" value="110 antibodies from 16 providers"/>
</dbReference>
<dbReference type="DNASU" id="64776"/>
<dbReference type="Ensembl" id="ENST00000260276.8">
    <property type="protein sequence ID" value="ENSP00000260276.3"/>
    <property type="gene ID" value="ENSG00000137720.8"/>
</dbReference>
<dbReference type="GeneID" id="64776"/>
<dbReference type="KEGG" id="hsa:64776"/>
<dbReference type="MANE-Select" id="ENST00000260276.8">
    <property type="protein sequence ID" value="ENSP00000260276.3"/>
    <property type="RefSeq nucleotide sequence ID" value="NM_022761.3"/>
    <property type="RefSeq protein sequence ID" value="NP_073598.1"/>
</dbReference>
<dbReference type="UCSC" id="uc001pmd.4">
    <property type="organism name" value="human"/>
</dbReference>
<dbReference type="AGR" id="HGNC:1163"/>
<dbReference type="CTD" id="64776"/>
<dbReference type="DisGeNET" id="64776"/>
<dbReference type="GeneCards" id="CFAP68"/>
<dbReference type="HGNC" id="HGNC:1163">
    <property type="gene designation" value="CFAP68"/>
</dbReference>
<dbReference type="HPA" id="ENSG00000137720">
    <property type="expression patterns" value="Low tissue specificity"/>
</dbReference>
<dbReference type="neXtProt" id="NX_Q9H5F2"/>
<dbReference type="OpenTargets" id="ENSG00000137720"/>
<dbReference type="PharmGKB" id="PA25477"/>
<dbReference type="VEuPathDB" id="HostDB:ENSG00000137720"/>
<dbReference type="eggNOG" id="ENOG502S5NG">
    <property type="taxonomic scope" value="Eukaryota"/>
</dbReference>
<dbReference type="GeneTree" id="ENSGT00390000002905"/>
<dbReference type="InParanoid" id="Q9H5F2"/>
<dbReference type="OMA" id="QYDHYFE"/>
<dbReference type="PAN-GO" id="Q9H5F2">
    <property type="GO annotations" value="0 GO annotations based on evolutionary models"/>
</dbReference>
<dbReference type="PhylomeDB" id="Q9H5F2"/>
<dbReference type="TreeFam" id="TF329225"/>
<dbReference type="PathwayCommons" id="Q9H5F2"/>
<dbReference type="SignaLink" id="Q9H5F2"/>
<dbReference type="BioGRID-ORCS" id="64776">
    <property type="hits" value="6 hits in 1126 CRISPR screens"/>
</dbReference>
<dbReference type="ChiTaRS" id="C11orf1">
    <property type="organism name" value="human"/>
</dbReference>
<dbReference type="GeneWiki" id="C11orf1"/>
<dbReference type="GenomeRNAi" id="64776"/>
<dbReference type="Pharos" id="Q9H5F2">
    <property type="development level" value="Tdark"/>
</dbReference>
<dbReference type="PRO" id="PR:Q9H5F2"/>
<dbReference type="Proteomes" id="UP000005640">
    <property type="component" value="Chromosome 11"/>
</dbReference>
<dbReference type="RNAct" id="Q9H5F2">
    <property type="molecule type" value="protein"/>
</dbReference>
<dbReference type="Bgee" id="ENSG00000137720">
    <property type="expression patterns" value="Expressed in sperm and 179 other cell types or tissues"/>
</dbReference>
<dbReference type="ExpressionAtlas" id="Q9H5F2">
    <property type="expression patterns" value="baseline and differential"/>
</dbReference>
<dbReference type="GO" id="GO:0160111">
    <property type="term" value="C:axonemal A tubule inner sheath"/>
    <property type="evidence" value="ECO:0000250"/>
    <property type="project" value="UniProtKB"/>
</dbReference>
<dbReference type="GO" id="GO:0005930">
    <property type="term" value="C:axoneme"/>
    <property type="evidence" value="ECO:0000314"/>
    <property type="project" value="UniProtKB"/>
</dbReference>
<dbReference type="GO" id="GO:0005929">
    <property type="term" value="C:cilium"/>
    <property type="evidence" value="ECO:0000314"/>
    <property type="project" value="UniProtKB"/>
</dbReference>
<dbReference type="GO" id="GO:0005654">
    <property type="term" value="C:nucleoplasm"/>
    <property type="evidence" value="ECO:0000314"/>
    <property type="project" value="HPA"/>
</dbReference>
<dbReference type="GO" id="GO:0036126">
    <property type="term" value="C:sperm flagellum"/>
    <property type="evidence" value="ECO:0000250"/>
    <property type="project" value="UniProtKB"/>
</dbReference>
<dbReference type="GO" id="GO:0030317">
    <property type="term" value="P:flagellated sperm motility"/>
    <property type="evidence" value="ECO:0000250"/>
    <property type="project" value="UniProtKB"/>
</dbReference>
<dbReference type="InterPro" id="IPR009524">
    <property type="entry name" value="CFAP68"/>
</dbReference>
<dbReference type="InterPro" id="IPR037662">
    <property type="entry name" value="CFAP68/107"/>
</dbReference>
<dbReference type="PANTHER" id="PTHR31180">
    <property type="entry name" value="CILIA- AND FLAGELLA-ASSOCIATED PROTEIN 107-RELATED"/>
    <property type="match status" value="1"/>
</dbReference>
<dbReference type="PANTHER" id="PTHR31180:SF3">
    <property type="entry name" value="EXPRESSED SEQUENCE EH456644"/>
    <property type="match status" value="1"/>
</dbReference>
<dbReference type="Pfam" id="PF06608">
    <property type="entry name" value="CFAP68"/>
    <property type="match status" value="1"/>
</dbReference>
<proteinExistence type="evidence at protein level"/>
<evidence type="ECO:0000250" key="1">
    <source>
        <dbReference type="UniProtKB" id="Q9D131"/>
    </source>
</evidence>
<evidence type="ECO:0000269" key="2">
    <source>
    </source>
</evidence>
<evidence type="ECO:0000269" key="3">
    <source>
    </source>
</evidence>
<evidence type="ECO:0000269" key="4">
    <source>
    </source>
</evidence>
<evidence type="ECO:0000269" key="5">
    <source ref="3"/>
</evidence>
<evidence type="ECO:0000305" key="6"/>
<evidence type="ECO:0000305" key="7">
    <source>
    </source>
</evidence>
<evidence type="ECO:0000312" key="8">
    <source>
        <dbReference type="HGNC" id="HGNC:1163"/>
    </source>
</evidence>
<feature type="chain" id="PRO_0000089829" description="Cilia- and flagella-associated protein 68">
    <location>
        <begin position="1"/>
        <end position="150"/>
    </location>
</feature>
<feature type="region of interest" description="Mn 1" evidence="7">
    <location>
        <begin position="99"/>
        <end position="110"/>
    </location>
</feature>
<feature type="region of interest" description="Mn 2" evidence="7">
    <location>
        <begin position="140"/>
        <end position="150"/>
    </location>
</feature>
<feature type="sequence variant" id="VAR_054163" description="In dbSNP:rs9280." evidence="2 5">
    <original>V</original>
    <variation>A</variation>
    <location>
        <position position="40"/>
    </location>
</feature>
<feature type="sequence variant" id="VAR_050861" description="In dbSNP:rs11540721.">
    <original>K</original>
    <variation>Q</variation>
    <location>
        <position position="49"/>
    </location>
</feature>
<feature type="sequence variant" id="VAR_050862" description="In dbSNP:rs3180820.">
    <original>Q</original>
    <variation>H</variation>
    <location>
        <position position="85"/>
    </location>
</feature>
<gene>
    <name evidence="8" type="primary">CFAP68</name>
    <name type="synonym">C11orf1</name>
</gene>
<accession>Q9H5F2</accession>
<accession>Q6I9X7</accession>
<accession>Q9NQC6</accession>
<name>CFA68_HUMAN</name>